<organism>
    <name type="scientific">Medicago sativa</name>
    <name type="common">Alfalfa</name>
    <dbReference type="NCBI Taxonomy" id="3879"/>
    <lineage>
        <taxon>Eukaryota</taxon>
        <taxon>Viridiplantae</taxon>
        <taxon>Streptophyta</taxon>
        <taxon>Embryophyta</taxon>
        <taxon>Tracheophyta</taxon>
        <taxon>Spermatophyta</taxon>
        <taxon>Magnoliopsida</taxon>
        <taxon>eudicotyledons</taxon>
        <taxon>Gunneridae</taxon>
        <taxon>Pentapetalae</taxon>
        <taxon>rosids</taxon>
        <taxon>fabids</taxon>
        <taxon>Fabales</taxon>
        <taxon>Fabaceae</taxon>
        <taxon>Papilionoideae</taxon>
        <taxon>50 kb inversion clade</taxon>
        <taxon>NPAAA clade</taxon>
        <taxon>Hologalegina</taxon>
        <taxon>IRL clade</taxon>
        <taxon>Trifolieae</taxon>
        <taxon>Medicago</taxon>
    </lineage>
</organism>
<name>FER_MEDSA</name>
<dbReference type="PIR" id="A00227">
    <property type="entry name" value="FEAA"/>
</dbReference>
<dbReference type="SMR" id="P00220"/>
<dbReference type="GO" id="GO:0009570">
    <property type="term" value="C:chloroplast stroma"/>
    <property type="evidence" value="ECO:0007669"/>
    <property type="project" value="TreeGrafter"/>
</dbReference>
<dbReference type="GO" id="GO:0051537">
    <property type="term" value="F:2 iron, 2 sulfur cluster binding"/>
    <property type="evidence" value="ECO:0007669"/>
    <property type="project" value="UniProtKB-KW"/>
</dbReference>
<dbReference type="GO" id="GO:0009055">
    <property type="term" value="F:electron transfer activity"/>
    <property type="evidence" value="ECO:0007669"/>
    <property type="project" value="InterPro"/>
</dbReference>
<dbReference type="GO" id="GO:0046872">
    <property type="term" value="F:metal ion binding"/>
    <property type="evidence" value="ECO:0007669"/>
    <property type="project" value="UniProtKB-KW"/>
</dbReference>
<dbReference type="GO" id="GO:0022900">
    <property type="term" value="P:electron transport chain"/>
    <property type="evidence" value="ECO:0007669"/>
    <property type="project" value="InterPro"/>
</dbReference>
<dbReference type="CDD" id="cd00207">
    <property type="entry name" value="fer2"/>
    <property type="match status" value="1"/>
</dbReference>
<dbReference type="FunFam" id="3.10.20.30:FF:000014">
    <property type="entry name" value="Ferredoxin"/>
    <property type="match status" value="1"/>
</dbReference>
<dbReference type="Gene3D" id="3.10.20.30">
    <property type="match status" value="1"/>
</dbReference>
<dbReference type="InterPro" id="IPR036010">
    <property type="entry name" value="2Fe-2S_ferredoxin-like_sf"/>
</dbReference>
<dbReference type="InterPro" id="IPR001041">
    <property type="entry name" value="2Fe-2S_ferredoxin-type"/>
</dbReference>
<dbReference type="InterPro" id="IPR006058">
    <property type="entry name" value="2Fe2S_fd_BS"/>
</dbReference>
<dbReference type="InterPro" id="IPR012675">
    <property type="entry name" value="Beta-grasp_dom_sf"/>
</dbReference>
<dbReference type="InterPro" id="IPR010241">
    <property type="entry name" value="Fd_pln"/>
</dbReference>
<dbReference type="NCBIfam" id="TIGR02008">
    <property type="entry name" value="fdx_plant"/>
    <property type="match status" value="1"/>
</dbReference>
<dbReference type="PANTHER" id="PTHR43112">
    <property type="entry name" value="FERREDOXIN"/>
    <property type="match status" value="1"/>
</dbReference>
<dbReference type="PANTHER" id="PTHR43112:SF3">
    <property type="entry name" value="FERREDOXIN-2, CHLOROPLASTIC"/>
    <property type="match status" value="1"/>
</dbReference>
<dbReference type="Pfam" id="PF00111">
    <property type="entry name" value="Fer2"/>
    <property type="match status" value="1"/>
</dbReference>
<dbReference type="SUPFAM" id="SSF54292">
    <property type="entry name" value="2Fe-2S ferredoxin-like"/>
    <property type="match status" value="1"/>
</dbReference>
<dbReference type="PROSITE" id="PS00197">
    <property type="entry name" value="2FE2S_FER_1"/>
    <property type="match status" value="1"/>
</dbReference>
<dbReference type="PROSITE" id="PS51085">
    <property type="entry name" value="2FE2S_FER_2"/>
    <property type="match status" value="1"/>
</dbReference>
<feature type="chain" id="PRO_0000189341" description="Ferredoxin">
    <location>
        <begin position="1"/>
        <end position="97"/>
    </location>
</feature>
<feature type="domain" description="2Fe-2S ferredoxin-type" evidence="1">
    <location>
        <begin position="3"/>
        <end position="93"/>
    </location>
</feature>
<feature type="binding site" evidence="1">
    <location>
        <position position="39"/>
    </location>
    <ligand>
        <name>[2Fe-2S] cluster</name>
        <dbReference type="ChEBI" id="CHEBI:190135"/>
    </ligand>
</feature>
<feature type="binding site" evidence="1">
    <location>
        <position position="44"/>
    </location>
    <ligand>
        <name>[2Fe-2S] cluster</name>
        <dbReference type="ChEBI" id="CHEBI:190135"/>
    </ligand>
</feature>
<feature type="binding site" evidence="1">
    <location>
        <position position="47"/>
    </location>
    <ligand>
        <name>[2Fe-2S] cluster</name>
        <dbReference type="ChEBI" id="CHEBI:190135"/>
    </ligand>
</feature>
<feature type="binding site" evidence="1">
    <location>
        <position position="77"/>
    </location>
    <ligand>
        <name>[2Fe-2S] cluster</name>
        <dbReference type="ChEBI" id="CHEBI:190135"/>
    </ligand>
</feature>
<protein>
    <recommendedName>
        <fullName>Ferredoxin</fullName>
    </recommendedName>
</protein>
<evidence type="ECO:0000255" key="1">
    <source>
        <dbReference type="PROSITE-ProRule" id="PRU00465"/>
    </source>
</evidence>
<evidence type="ECO:0000305" key="2"/>
<reference key="1">
    <citation type="journal article" date="1969" name="J. Biol. Chem.">
        <title>Primary structure of alfalfa ferredoxin.</title>
        <authorList>
            <person name="Keresztes-Nagy S."/>
            <person name="Perini F."/>
            <person name="Margoliash E."/>
        </authorList>
    </citation>
    <scope>PROTEIN SEQUENCE</scope>
</reference>
<comment type="function">
    <text>Ferredoxins are iron-sulfur proteins that transfer electrons in a wide variety of metabolic reactions.</text>
</comment>
<comment type="cofactor">
    <cofactor>
        <name>[2Fe-2S] cluster</name>
        <dbReference type="ChEBI" id="CHEBI:190135"/>
    </cofactor>
    <text>Binds 1 [2Fe-2S] cluster.</text>
</comment>
<comment type="subcellular location">
    <subcellularLocation>
        <location>Plastid</location>
        <location>Chloroplast</location>
    </subcellularLocation>
</comment>
<comment type="similarity">
    <text evidence="2">Belongs to the 2Fe2S plant-type ferredoxin family.</text>
</comment>
<accession>P00220</accession>
<keyword id="KW-0001">2Fe-2S</keyword>
<keyword id="KW-0150">Chloroplast</keyword>
<keyword id="KW-0903">Direct protein sequencing</keyword>
<keyword id="KW-0249">Electron transport</keyword>
<keyword id="KW-0408">Iron</keyword>
<keyword id="KW-0411">Iron-sulfur</keyword>
<keyword id="KW-0479">Metal-binding</keyword>
<keyword id="KW-0934">Plastid</keyword>
<keyword id="KW-0813">Transport</keyword>
<proteinExistence type="evidence at protein level"/>
<sequence length="97" mass="10493">ASYKVKLVTPEGTQEFECPDDVYILDHAEEEGIVLPYSCRAGSCSSCAGKVAAGEVNQSDGSFLDDDQIEEGWVLTCVAYAKSDVTIETHKEEELTA</sequence>